<dbReference type="EC" id="6.3.5.-" evidence="1"/>
<dbReference type="EMBL" id="CP000423">
    <property type="protein sequence ID" value="ABJ69853.1"/>
    <property type="molecule type" value="Genomic_DNA"/>
</dbReference>
<dbReference type="RefSeq" id="WP_011674373.1">
    <property type="nucleotide sequence ID" value="NC_008526.1"/>
</dbReference>
<dbReference type="RefSeq" id="YP_806295.1">
    <property type="nucleotide sequence ID" value="NC_008526.1"/>
</dbReference>
<dbReference type="SMR" id="Q03AB9"/>
<dbReference type="STRING" id="321967.LSEI_1059"/>
<dbReference type="PaxDb" id="321967-LSEI_1059"/>
<dbReference type="KEGG" id="lca:LSEI_1059"/>
<dbReference type="PATRIC" id="fig|321967.11.peg.1031"/>
<dbReference type="HOGENOM" id="CLU_019240_0_0_9"/>
<dbReference type="Proteomes" id="UP000001651">
    <property type="component" value="Chromosome"/>
</dbReference>
<dbReference type="GO" id="GO:0050566">
    <property type="term" value="F:asparaginyl-tRNA synthase (glutamine-hydrolyzing) activity"/>
    <property type="evidence" value="ECO:0007669"/>
    <property type="project" value="RHEA"/>
</dbReference>
<dbReference type="GO" id="GO:0005524">
    <property type="term" value="F:ATP binding"/>
    <property type="evidence" value="ECO:0007669"/>
    <property type="project" value="UniProtKB-KW"/>
</dbReference>
<dbReference type="GO" id="GO:0050567">
    <property type="term" value="F:glutaminyl-tRNA synthase (glutamine-hydrolyzing) activity"/>
    <property type="evidence" value="ECO:0007669"/>
    <property type="project" value="UniProtKB-UniRule"/>
</dbReference>
<dbReference type="GO" id="GO:0070681">
    <property type="term" value="P:glutaminyl-tRNAGln biosynthesis via transamidation"/>
    <property type="evidence" value="ECO:0007669"/>
    <property type="project" value="TreeGrafter"/>
</dbReference>
<dbReference type="GO" id="GO:0006412">
    <property type="term" value="P:translation"/>
    <property type="evidence" value="ECO:0007669"/>
    <property type="project" value="UniProtKB-UniRule"/>
</dbReference>
<dbReference type="FunFam" id="1.10.10.410:FF:000001">
    <property type="entry name" value="Aspartyl/glutamyl-tRNA(Asn/Gln) amidotransferase subunit B"/>
    <property type="match status" value="1"/>
</dbReference>
<dbReference type="FunFam" id="1.10.150.380:FF:000001">
    <property type="entry name" value="Aspartyl/glutamyl-tRNA(Asn/Gln) amidotransferase subunit B"/>
    <property type="match status" value="1"/>
</dbReference>
<dbReference type="Gene3D" id="1.10.10.410">
    <property type="match status" value="1"/>
</dbReference>
<dbReference type="Gene3D" id="1.10.150.380">
    <property type="entry name" value="GatB domain, N-terminal subdomain"/>
    <property type="match status" value="1"/>
</dbReference>
<dbReference type="HAMAP" id="MF_00121">
    <property type="entry name" value="GatB"/>
    <property type="match status" value="1"/>
</dbReference>
<dbReference type="InterPro" id="IPR017959">
    <property type="entry name" value="Asn/Gln-tRNA_amidoTrfase_suB/E"/>
</dbReference>
<dbReference type="InterPro" id="IPR006075">
    <property type="entry name" value="Asn/Gln-tRNA_Trfase_suB/E_cat"/>
</dbReference>
<dbReference type="InterPro" id="IPR018027">
    <property type="entry name" value="Asn/Gln_amidotransferase"/>
</dbReference>
<dbReference type="InterPro" id="IPR003789">
    <property type="entry name" value="Asn/Gln_tRNA_amidoTrase-B-like"/>
</dbReference>
<dbReference type="InterPro" id="IPR004413">
    <property type="entry name" value="GatB"/>
</dbReference>
<dbReference type="InterPro" id="IPR042114">
    <property type="entry name" value="GatB_C_1"/>
</dbReference>
<dbReference type="InterPro" id="IPR023168">
    <property type="entry name" value="GatB_Yqey_C_2"/>
</dbReference>
<dbReference type="InterPro" id="IPR017958">
    <property type="entry name" value="Gln-tRNA_amidoTrfase_suB_CS"/>
</dbReference>
<dbReference type="InterPro" id="IPR014746">
    <property type="entry name" value="Gln_synth/guanido_kin_cat_dom"/>
</dbReference>
<dbReference type="NCBIfam" id="TIGR00133">
    <property type="entry name" value="gatB"/>
    <property type="match status" value="1"/>
</dbReference>
<dbReference type="NCBIfam" id="NF004011">
    <property type="entry name" value="PRK05477.1-1"/>
    <property type="match status" value="1"/>
</dbReference>
<dbReference type="NCBIfam" id="NF004012">
    <property type="entry name" value="PRK05477.1-2"/>
    <property type="match status" value="1"/>
</dbReference>
<dbReference type="NCBIfam" id="NF004014">
    <property type="entry name" value="PRK05477.1-4"/>
    <property type="match status" value="1"/>
</dbReference>
<dbReference type="PANTHER" id="PTHR11659">
    <property type="entry name" value="GLUTAMYL-TRNA GLN AMIDOTRANSFERASE SUBUNIT B MITOCHONDRIAL AND PROKARYOTIC PET112-RELATED"/>
    <property type="match status" value="1"/>
</dbReference>
<dbReference type="PANTHER" id="PTHR11659:SF0">
    <property type="entry name" value="GLUTAMYL-TRNA(GLN) AMIDOTRANSFERASE SUBUNIT B, MITOCHONDRIAL"/>
    <property type="match status" value="1"/>
</dbReference>
<dbReference type="Pfam" id="PF02934">
    <property type="entry name" value="GatB_N"/>
    <property type="match status" value="1"/>
</dbReference>
<dbReference type="Pfam" id="PF02637">
    <property type="entry name" value="GatB_Yqey"/>
    <property type="match status" value="1"/>
</dbReference>
<dbReference type="SMART" id="SM00845">
    <property type="entry name" value="GatB_Yqey"/>
    <property type="match status" value="1"/>
</dbReference>
<dbReference type="SUPFAM" id="SSF89095">
    <property type="entry name" value="GatB/YqeY motif"/>
    <property type="match status" value="1"/>
</dbReference>
<dbReference type="SUPFAM" id="SSF55931">
    <property type="entry name" value="Glutamine synthetase/guanido kinase"/>
    <property type="match status" value="1"/>
</dbReference>
<dbReference type="PROSITE" id="PS01234">
    <property type="entry name" value="GATB"/>
    <property type="match status" value="1"/>
</dbReference>
<feature type="chain" id="PRO_1000015977" description="Aspartyl/glutamyl-tRNA(Asn/Gln) amidotransferase subunit B">
    <location>
        <begin position="1"/>
        <end position="476"/>
    </location>
</feature>
<reference key="1">
    <citation type="journal article" date="2006" name="Proc. Natl. Acad. Sci. U.S.A.">
        <title>Comparative genomics of the lactic acid bacteria.</title>
        <authorList>
            <person name="Makarova K.S."/>
            <person name="Slesarev A."/>
            <person name="Wolf Y.I."/>
            <person name="Sorokin A."/>
            <person name="Mirkin B."/>
            <person name="Koonin E.V."/>
            <person name="Pavlov A."/>
            <person name="Pavlova N."/>
            <person name="Karamychev V."/>
            <person name="Polouchine N."/>
            <person name="Shakhova V."/>
            <person name="Grigoriev I."/>
            <person name="Lou Y."/>
            <person name="Rohksar D."/>
            <person name="Lucas S."/>
            <person name="Huang K."/>
            <person name="Goodstein D.M."/>
            <person name="Hawkins T."/>
            <person name="Plengvidhya V."/>
            <person name="Welker D."/>
            <person name="Hughes J."/>
            <person name="Goh Y."/>
            <person name="Benson A."/>
            <person name="Baldwin K."/>
            <person name="Lee J.-H."/>
            <person name="Diaz-Muniz I."/>
            <person name="Dosti B."/>
            <person name="Smeianov V."/>
            <person name="Wechter W."/>
            <person name="Barabote R."/>
            <person name="Lorca G."/>
            <person name="Altermann E."/>
            <person name="Barrangou R."/>
            <person name="Ganesan B."/>
            <person name="Xie Y."/>
            <person name="Rawsthorne H."/>
            <person name="Tamir D."/>
            <person name="Parker C."/>
            <person name="Breidt F."/>
            <person name="Broadbent J.R."/>
            <person name="Hutkins R."/>
            <person name="O'Sullivan D."/>
            <person name="Steele J."/>
            <person name="Unlu G."/>
            <person name="Saier M.H. Jr."/>
            <person name="Klaenhammer T."/>
            <person name="Richardson P."/>
            <person name="Kozyavkin S."/>
            <person name="Weimer B.C."/>
            <person name="Mills D.A."/>
        </authorList>
    </citation>
    <scope>NUCLEOTIDE SEQUENCE [LARGE SCALE GENOMIC DNA]</scope>
    <source>
        <strain>ATCC 334 / BCRC 17002 / CCUG 31169 / CIP 107868 / KCTC 3260 / NRRL B-441</strain>
    </source>
</reference>
<keyword id="KW-0067">ATP-binding</keyword>
<keyword id="KW-0436">Ligase</keyword>
<keyword id="KW-0547">Nucleotide-binding</keyword>
<keyword id="KW-0648">Protein biosynthesis</keyword>
<keyword id="KW-1185">Reference proteome</keyword>
<gene>
    <name evidence="1" type="primary">gatB</name>
    <name type="ordered locus">LSEI_1059</name>
</gene>
<proteinExistence type="inferred from homology"/>
<sequence length="476" mass="53365">MNFETTIGLEVHVELKTKSKMFSPSPVTYGQEPNTQTNVIDWGFPGVLPSINRGAYQLGIMVGLALHADITRLTHFDRKNYFYPDNPKAYQITQSEKPLGTNGWVEIEVDGKKKKIGIAELHVEEDAGKNQHEDDGYSYVDLNRQGTPLVEIVSKPDITSPEEAYAYLETLRQIVQFTGASDVKMEEGSMRVDTNLSVRPIGQEHFGIKTEIKNLNSFVHVRDGLAFEEKRQQAVLLSGGEVRQETRRWDPDAKETLLMRVKEGADDYRYFPEPDLPPVAVSQKWIDDIQASLPQPPAERRQRYIEDWGIPAYDAGVLTQTKEMSDFFEATVAQGADAKQASNWLMGEVSGFLNAQHVELGQVALTPAHLAGMIKLIGDGTISSKMAKKVFKEIIQHDTDPDKWVHEKGLIQLSDPAKLTPIIDEILDNNQQSIDDFKAGKDRAIGFLVGQIMKQTHGQANPKVVNQILMAEIKQR</sequence>
<organism>
    <name type="scientific">Lacticaseibacillus paracasei (strain ATCC 334 / BCRC 17002 / CCUG 31169 / CIP 107868 / KCTC 3260 / NRRL B-441)</name>
    <name type="common">Lactobacillus paracasei</name>
    <dbReference type="NCBI Taxonomy" id="321967"/>
    <lineage>
        <taxon>Bacteria</taxon>
        <taxon>Bacillati</taxon>
        <taxon>Bacillota</taxon>
        <taxon>Bacilli</taxon>
        <taxon>Lactobacillales</taxon>
        <taxon>Lactobacillaceae</taxon>
        <taxon>Lacticaseibacillus</taxon>
    </lineage>
</organism>
<evidence type="ECO:0000255" key="1">
    <source>
        <dbReference type="HAMAP-Rule" id="MF_00121"/>
    </source>
</evidence>
<protein>
    <recommendedName>
        <fullName evidence="1">Aspartyl/glutamyl-tRNA(Asn/Gln) amidotransferase subunit B</fullName>
        <shortName evidence="1">Asp/Glu-ADT subunit B</shortName>
        <ecNumber evidence="1">6.3.5.-</ecNumber>
    </recommendedName>
</protein>
<name>GATB_LACP3</name>
<comment type="function">
    <text evidence="1">Allows the formation of correctly charged Asn-tRNA(Asn) or Gln-tRNA(Gln) through the transamidation of misacylated Asp-tRNA(Asn) or Glu-tRNA(Gln) in organisms which lack either or both of asparaginyl-tRNA or glutaminyl-tRNA synthetases. The reaction takes place in the presence of glutamine and ATP through an activated phospho-Asp-tRNA(Asn) or phospho-Glu-tRNA(Gln).</text>
</comment>
<comment type="catalytic activity">
    <reaction evidence="1">
        <text>L-glutamyl-tRNA(Gln) + L-glutamine + ATP + H2O = L-glutaminyl-tRNA(Gln) + L-glutamate + ADP + phosphate + H(+)</text>
        <dbReference type="Rhea" id="RHEA:17521"/>
        <dbReference type="Rhea" id="RHEA-COMP:9681"/>
        <dbReference type="Rhea" id="RHEA-COMP:9684"/>
        <dbReference type="ChEBI" id="CHEBI:15377"/>
        <dbReference type="ChEBI" id="CHEBI:15378"/>
        <dbReference type="ChEBI" id="CHEBI:29985"/>
        <dbReference type="ChEBI" id="CHEBI:30616"/>
        <dbReference type="ChEBI" id="CHEBI:43474"/>
        <dbReference type="ChEBI" id="CHEBI:58359"/>
        <dbReference type="ChEBI" id="CHEBI:78520"/>
        <dbReference type="ChEBI" id="CHEBI:78521"/>
        <dbReference type="ChEBI" id="CHEBI:456216"/>
    </reaction>
</comment>
<comment type="catalytic activity">
    <reaction evidence="1">
        <text>L-aspartyl-tRNA(Asn) + L-glutamine + ATP + H2O = L-asparaginyl-tRNA(Asn) + L-glutamate + ADP + phosphate + 2 H(+)</text>
        <dbReference type="Rhea" id="RHEA:14513"/>
        <dbReference type="Rhea" id="RHEA-COMP:9674"/>
        <dbReference type="Rhea" id="RHEA-COMP:9677"/>
        <dbReference type="ChEBI" id="CHEBI:15377"/>
        <dbReference type="ChEBI" id="CHEBI:15378"/>
        <dbReference type="ChEBI" id="CHEBI:29985"/>
        <dbReference type="ChEBI" id="CHEBI:30616"/>
        <dbReference type="ChEBI" id="CHEBI:43474"/>
        <dbReference type="ChEBI" id="CHEBI:58359"/>
        <dbReference type="ChEBI" id="CHEBI:78515"/>
        <dbReference type="ChEBI" id="CHEBI:78516"/>
        <dbReference type="ChEBI" id="CHEBI:456216"/>
    </reaction>
</comment>
<comment type="subunit">
    <text evidence="1">Heterotrimer of A, B and C subunits.</text>
</comment>
<comment type="similarity">
    <text evidence="1">Belongs to the GatB/GatE family. GatB subfamily.</text>
</comment>
<accession>Q03AB9</accession>